<proteinExistence type="evidence at transcript level"/>
<feature type="signal peptide" evidence="2">
    <location>
        <begin position="1"/>
        <end position="22"/>
    </location>
</feature>
<feature type="chain" id="PRO_0000002330" description="Cyclic GMP-AMP phosphodiesterase SMPDL3A">
    <location>
        <begin position="23"/>
        <end position="445"/>
    </location>
</feature>
<feature type="binding site" evidence="1">
    <location>
        <position position="42"/>
    </location>
    <ligand>
        <name>Zn(2+)</name>
        <dbReference type="ChEBI" id="CHEBI:29105"/>
        <label>1</label>
    </ligand>
</feature>
<feature type="binding site" evidence="1">
    <location>
        <position position="44"/>
    </location>
    <ligand>
        <name>Zn(2+)</name>
        <dbReference type="ChEBI" id="CHEBI:29105"/>
        <label>1</label>
    </ligand>
</feature>
<feature type="binding site" evidence="1">
    <location>
        <position position="107"/>
    </location>
    <ligand>
        <name>Zn(2+)</name>
        <dbReference type="ChEBI" id="CHEBI:29105"/>
        <label>1</label>
    </ligand>
</feature>
<feature type="binding site" evidence="1">
    <location>
        <position position="107"/>
    </location>
    <ligand>
        <name>Zn(2+)</name>
        <dbReference type="ChEBI" id="CHEBI:29105"/>
        <label>2</label>
    </ligand>
</feature>
<feature type="binding site" evidence="1">
    <location>
        <position position="111"/>
    </location>
    <ligand>
        <name>ATP</name>
        <dbReference type="ChEBI" id="CHEBI:30616"/>
    </ligand>
</feature>
<feature type="binding site" evidence="1">
    <location>
        <position position="148"/>
    </location>
    <ligand>
        <name>ATP</name>
        <dbReference type="ChEBI" id="CHEBI:30616"/>
    </ligand>
</feature>
<feature type="binding site" evidence="1">
    <location>
        <position position="148"/>
    </location>
    <ligand>
        <name>Zn(2+)</name>
        <dbReference type="ChEBI" id="CHEBI:29105"/>
        <label>2</label>
    </ligand>
</feature>
<feature type="binding site" evidence="1">
    <location>
        <position position="149"/>
    </location>
    <ligand>
        <name>ATP</name>
        <dbReference type="ChEBI" id="CHEBI:30616"/>
    </ligand>
</feature>
<feature type="binding site" evidence="1">
    <location>
        <position position="249"/>
    </location>
    <ligand>
        <name>Zn(2+)</name>
        <dbReference type="ChEBI" id="CHEBI:29105"/>
        <label>2</label>
    </ligand>
</feature>
<feature type="binding site" evidence="1">
    <location>
        <position position="290"/>
    </location>
    <ligand>
        <name>Zn(2+)</name>
        <dbReference type="ChEBI" id="CHEBI:29105"/>
        <label>2</label>
    </ligand>
</feature>
<feature type="binding site" evidence="1">
    <location>
        <position position="292"/>
    </location>
    <ligand>
        <name>Zn(2+)</name>
        <dbReference type="ChEBI" id="CHEBI:29105"/>
        <label>1</label>
    </ligand>
</feature>
<feature type="glycosylation site" description="N-linked (GlcNAc...) asparagine" evidence="2">
    <location>
        <position position="66"/>
    </location>
</feature>
<feature type="glycosylation site" description="N-linked (GlcNAc...) asparagine" evidence="2">
    <location>
        <position position="128"/>
    </location>
</feature>
<feature type="glycosylation site" description="N-linked (GlcNAc...) asparagine" evidence="2">
    <location>
        <position position="219"/>
    </location>
</feature>
<feature type="glycosylation site" description="N-linked (GlcNAc...) asparagine" evidence="2">
    <location>
        <position position="235"/>
    </location>
</feature>
<feature type="glycosylation site" description="N-linked (GlcNAc...) asparagine" evidence="2">
    <location>
        <position position="353"/>
    </location>
</feature>
<feature type="glycosylation site" description="N-linked (GlcNAc...) asparagine" evidence="2">
    <location>
        <position position="364"/>
    </location>
</feature>
<feature type="disulfide bond" evidence="1">
    <location>
        <begin position="59"/>
        <end position="78"/>
    </location>
</feature>
<feature type="disulfide bond" evidence="2">
    <location>
        <begin position="417"/>
        <end position="421"/>
    </location>
</feature>
<feature type="disulfide bond" evidence="1">
    <location>
        <begin position="427"/>
        <end position="440"/>
    </location>
</feature>
<evidence type="ECO:0000250" key="1">
    <source>
        <dbReference type="UniProtKB" id="Q92484"/>
    </source>
</evidence>
<evidence type="ECO:0000255" key="2"/>
<evidence type="ECO:0000305" key="3"/>
<protein>
    <recommendedName>
        <fullName evidence="3">Cyclic GMP-AMP phosphodiesterase SMPDL3A</fullName>
        <shortName evidence="3">2',3'-cGAMP phosphodiesterase SMPDL3A</shortName>
        <ecNumber evidence="1">3.1.4.-</ecNumber>
    </recommendedName>
    <alternativeName>
        <fullName>Acid sphingomyelinase-like phosphodiesterase 3a</fullName>
        <shortName>ASM-like phosphodiesterase 3a</shortName>
        <ecNumber evidence="1">3.6.1.15</ecNumber>
    </alternativeName>
</protein>
<accession>Q641Z7</accession>
<gene>
    <name type="primary">Smpdl3a</name>
    <name type="synonym">Asml3a</name>
</gene>
<comment type="function">
    <text evidence="1">Cyclic-nucleotide phosphodiesterase that acts as a negative regulator of innate immunity by mediating degradation of 2',3'-cGAMP, thereby inhibiting the cGAS-STING signaling. Specifically linearizes 2',3'-cGAMP into 2'5'-bond pGpA and further hydrolyzes pGpA to produce GpA. Also has in vitro nucleotide phosphodiesterase activity with nucleoside triphosphates, such as ATP. Has in vitro activity with p-nitrophenyl-TMP. Has lower activity with nucleoside diphosphates, and no activity with nucleoside monophosphates. Has in vitro activity with CDP-choline, giving rise to CMP and phosphocholine. Has in vitro activity with CDP-ethanolamine. Does not have sphingomyelin phosphodiesterase activity.</text>
</comment>
<comment type="catalytic activity">
    <reaction evidence="1">
        <text>2',3'-cGAMP + H2O = 5'-pGpA(2'-5') + H(+)</text>
        <dbReference type="Rhea" id="RHEA:78339"/>
        <dbReference type="ChEBI" id="CHEBI:15377"/>
        <dbReference type="ChEBI" id="CHEBI:15378"/>
        <dbReference type="ChEBI" id="CHEBI:143093"/>
        <dbReference type="ChEBI" id="CHEBI:228270"/>
    </reaction>
    <physiologicalReaction direction="left-to-right" evidence="1">
        <dbReference type="Rhea" id="RHEA:78340"/>
    </physiologicalReaction>
</comment>
<comment type="catalytic activity">
    <reaction evidence="1">
        <text>5'-pGpA(2'-5') + H2O = 5'-GpA(2'-5') + phosphate</text>
        <dbReference type="Rhea" id="RHEA:78343"/>
        <dbReference type="ChEBI" id="CHEBI:15377"/>
        <dbReference type="ChEBI" id="CHEBI:43474"/>
        <dbReference type="ChEBI" id="CHEBI:228270"/>
        <dbReference type="ChEBI" id="CHEBI:228271"/>
    </reaction>
    <physiologicalReaction direction="left-to-right" evidence="1">
        <dbReference type="Rhea" id="RHEA:78344"/>
    </physiologicalReaction>
</comment>
<comment type="catalytic activity">
    <reaction evidence="1">
        <text>a ribonucleoside 5'-triphosphate + H2O = a ribonucleoside 5'-diphosphate + phosphate + H(+)</text>
        <dbReference type="Rhea" id="RHEA:23680"/>
        <dbReference type="ChEBI" id="CHEBI:15377"/>
        <dbReference type="ChEBI" id="CHEBI:15378"/>
        <dbReference type="ChEBI" id="CHEBI:43474"/>
        <dbReference type="ChEBI" id="CHEBI:57930"/>
        <dbReference type="ChEBI" id="CHEBI:61557"/>
        <dbReference type="EC" id="3.6.1.15"/>
    </reaction>
    <physiologicalReaction direction="left-to-right" evidence="1">
        <dbReference type="Rhea" id="RHEA:23681"/>
    </physiologicalReaction>
</comment>
<comment type="catalytic activity">
    <reaction evidence="1">
        <text>ATP + H2O = ADP + phosphate + H(+)</text>
        <dbReference type="Rhea" id="RHEA:13065"/>
        <dbReference type="ChEBI" id="CHEBI:15377"/>
        <dbReference type="ChEBI" id="CHEBI:15378"/>
        <dbReference type="ChEBI" id="CHEBI:30616"/>
        <dbReference type="ChEBI" id="CHEBI:43474"/>
        <dbReference type="ChEBI" id="CHEBI:456216"/>
    </reaction>
    <physiologicalReaction direction="left-to-right" evidence="1">
        <dbReference type="Rhea" id="RHEA:13066"/>
    </physiologicalReaction>
</comment>
<comment type="cofactor">
    <cofactor evidence="1">
        <name>Zn(2+)</name>
        <dbReference type="ChEBI" id="CHEBI:29105"/>
    </cofactor>
    <text evidence="1">Binds 2 Zn(2+) per subunit.</text>
</comment>
<comment type="subunit">
    <text evidence="1">Monomer. Homodimer; homodimerizes following 2',3'-cGAMP-binding.</text>
</comment>
<comment type="subcellular location">
    <subcellularLocation>
        <location evidence="1">Secreted</location>
    </subcellularLocation>
</comment>
<comment type="similarity">
    <text evidence="3">Belongs to the acid sphingomyelinase family.</text>
</comment>
<keyword id="KW-1015">Disulfide bond</keyword>
<keyword id="KW-0325">Glycoprotein</keyword>
<keyword id="KW-0378">Hydrolase</keyword>
<keyword id="KW-0479">Metal-binding</keyword>
<keyword id="KW-1185">Reference proteome</keyword>
<keyword id="KW-0964">Secreted</keyword>
<keyword id="KW-0732">Signal</keyword>
<keyword id="KW-0862">Zinc</keyword>
<reference key="1">
    <citation type="journal article" date="2004" name="Genome Res.">
        <title>The status, quality, and expansion of the NIH full-length cDNA project: the Mammalian Gene Collection (MGC).</title>
        <authorList>
            <consortium name="The MGC Project Team"/>
        </authorList>
    </citation>
    <scope>NUCLEOTIDE SEQUENCE [LARGE SCALE MRNA]</scope>
    <source>
        <tissue>Kidney</tissue>
    </source>
</reference>
<sequence>MALPGNFLCCLLVAWLCDPGLGVPLAPAYGAPAVGQFWHVTDLHLDPTYHITDDHTKVCASSKGANVSNPGPFGDVLCDSPYQLILSAFDFIKNSGQEASFMIWTGDSPPHVPVRELSTGSVIEVITNMTVTVQNLFPNLQVFPALGNHDYWPQDQLPIATSKVYSAVSDLWKPWLDEEAISTLRKGGFYSQKVASNPDLRIISLNTNLYYGPNIMTLNKTDPANQFEWLENTLNSSLRNKEKVYVIAHVPVGYLPYATKTPAMRQYYNEKLVDIFRRYSSVIAGQFYGHTHRDSLMVLSDKNGNPINSVFVAPAVTPVKGVLEKETNNPGVRLFQYKPGDYTLLDMLQYYLNLTEANLKGESNWTLEYTLTQAYGVADLQPKSLHGLAQQLATIDSKQFLKYYHYFFVSYDSSAPCDQRCKTLQICAIMNLDLVSYEDCLKRHL</sequence>
<dbReference type="EC" id="3.1.4.-" evidence="1"/>
<dbReference type="EC" id="3.6.1.15" evidence="1"/>
<dbReference type="EMBL" id="BC082029">
    <property type="protein sequence ID" value="AAH82029.1"/>
    <property type="molecule type" value="mRNA"/>
</dbReference>
<dbReference type="RefSeq" id="NP_001005539.1">
    <property type="nucleotide sequence ID" value="NM_001005539.1"/>
</dbReference>
<dbReference type="SMR" id="Q641Z7"/>
<dbReference type="FunCoup" id="Q641Z7">
    <property type="interactions" value="84"/>
</dbReference>
<dbReference type="STRING" id="10116.ENSRNOP00000001081"/>
<dbReference type="GlyCosmos" id="Q641Z7">
    <property type="glycosylation" value="6 sites, No reported glycans"/>
</dbReference>
<dbReference type="GlyGen" id="Q641Z7">
    <property type="glycosylation" value="7 sites"/>
</dbReference>
<dbReference type="PhosphoSitePlus" id="Q641Z7"/>
<dbReference type="PaxDb" id="10116-ENSRNOP00000001081"/>
<dbReference type="Ensembl" id="ENSRNOT00000001081.6">
    <property type="protein sequence ID" value="ENSRNOP00000001081.3"/>
    <property type="gene ID" value="ENSRNOG00000000815.6"/>
</dbReference>
<dbReference type="GeneID" id="294422"/>
<dbReference type="KEGG" id="rno:294422"/>
<dbReference type="UCSC" id="RGD:1359277">
    <property type="organism name" value="rat"/>
</dbReference>
<dbReference type="AGR" id="RGD:1359277"/>
<dbReference type="CTD" id="10924"/>
<dbReference type="RGD" id="1359277">
    <property type="gene designation" value="Smpdl3a"/>
</dbReference>
<dbReference type="eggNOG" id="KOG3770">
    <property type="taxonomic scope" value="Eukaryota"/>
</dbReference>
<dbReference type="GeneTree" id="ENSGT00950000183182"/>
<dbReference type="HOGENOM" id="CLU_014743_0_0_1"/>
<dbReference type="InParanoid" id="Q641Z7"/>
<dbReference type="OMA" id="TAWHCRS"/>
<dbReference type="OrthoDB" id="348678at2759"/>
<dbReference type="PhylomeDB" id="Q641Z7"/>
<dbReference type="TreeFam" id="TF313674"/>
<dbReference type="PRO" id="PR:Q641Z7"/>
<dbReference type="Proteomes" id="UP000002494">
    <property type="component" value="Chromosome 20"/>
</dbReference>
<dbReference type="Bgee" id="ENSRNOG00000000815">
    <property type="expression patterns" value="Expressed in pancreas and 20 other cell types or tissues"/>
</dbReference>
<dbReference type="GO" id="GO:0005576">
    <property type="term" value="C:extracellular region"/>
    <property type="evidence" value="ECO:0000250"/>
    <property type="project" value="UniProtKB"/>
</dbReference>
<dbReference type="GO" id="GO:0005615">
    <property type="term" value="C:extracellular space"/>
    <property type="evidence" value="ECO:0000250"/>
    <property type="project" value="UniProtKB"/>
</dbReference>
<dbReference type="GO" id="GO:0016887">
    <property type="term" value="F:ATP hydrolysis activity"/>
    <property type="evidence" value="ECO:0007669"/>
    <property type="project" value="RHEA"/>
</dbReference>
<dbReference type="GO" id="GO:0008081">
    <property type="term" value="F:phosphoric diester hydrolase activity"/>
    <property type="evidence" value="ECO:0000250"/>
    <property type="project" value="UniProtKB"/>
</dbReference>
<dbReference type="GO" id="GO:0008270">
    <property type="term" value="F:zinc ion binding"/>
    <property type="evidence" value="ECO:0000250"/>
    <property type="project" value="UniProtKB"/>
</dbReference>
<dbReference type="GO" id="GO:0160049">
    <property type="term" value="P:negative regulation of cGAS/STING signaling pathway"/>
    <property type="evidence" value="ECO:0000250"/>
    <property type="project" value="UniProtKB"/>
</dbReference>
<dbReference type="GO" id="GO:0009143">
    <property type="term" value="P:nucleoside triphosphate catabolic process"/>
    <property type="evidence" value="ECO:0000250"/>
    <property type="project" value="UniProtKB"/>
</dbReference>
<dbReference type="CDD" id="cd00842">
    <property type="entry name" value="MPP_ASMase"/>
    <property type="match status" value="1"/>
</dbReference>
<dbReference type="FunFam" id="3.60.21.10:FF:000044">
    <property type="entry name" value="acid sphingomyelinase-like phosphodiesterase 3a"/>
    <property type="match status" value="1"/>
</dbReference>
<dbReference type="Gene3D" id="3.60.21.10">
    <property type="match status" value="1"/>
</dbReference>
<dbReference type="InterPro" id="IPR017064">
    <property type="entry name" value="ASM-like_Pdiesterase_prd"/>
</dbReference>
<dbReference type="InterPro" id="IPR045473">
    <property type="entry name" value="ASM_C"/>
</dbReference>
<dbReference type="InterPro" id="IPR041805">
    <property type="entry name" value="ASMase/PPN1_MPP"/>
</dbReference>
<dbReference type="InterPro" id="IPR004843">
    <property type="entry name" value="Calcineurin-like_PHP_ApaH"/>
</dbReference>
<dbReference type="InterPro" id="IPR029052">
    <property type="entry name" value="Metallo-depent_PP-like"/>
</dbReference>
<dbReference type="PANTHER" id="PTHR10340:SF24">
    <property type="entry name" value="ACID SPHINGOMYELINASE-LIKE PHOSPHODIESTERASE 3A"/>
    <property type="match status" value="1"/>
</dbReference>
<dbReference type="PANTHER" id="PTHR10340">
    <property type="entry name" value="SPHINGOMYELIN PHOSPHODIESTERASE"/>
    <property type="match status" value="1"/>
</dbReference>
<dbReference type="Pfam" id="PF19272">
    <property type="entry name" value="ASMase_C"/>
    <property type="match status" value="1"/>
</dbReference>
<dbReference type="Pfam" id="PF00149">
    <property type="entry name" value="Metallophos"/>
    <property type="match status" value="1"/>
</dbReference>
<dbReference type="PIRSF" id="PIRSF036767">
    <property type="entry name" value="ASM-like_PDE"/>
    <property type="match status" value="1"/>
</dbReference>
<dbReference type="SUPFAM" id="SSF56300">
    <property type="entry name" value="Metallo-dependent phosphatases"/>
    <property type="match status" value="1"/>
</dbReference>
<name>ASM3A_RAT</name>
<organism>
    <name type="scientific">Rattus norvegicus</name>
    <name type="common">Rat</name>
    <dbReference type="NCBI Taxonomy" id="10116"/>
    <lineage>
        <taxon>Eukaryota</taxon>
        <taxon>Metazoa</taxon>
        <taxon>Chordata</taxon>
        <taxon>Craniata</taxon>
        <taxon>Vertebrata</taxon>
        <taxon>Euteleostomi</taxon>
        <taxon>Mammalia</taxon>
        <taxon>Eutheria</taxon>
        <taxon>Euarchontoglires</taxon>
        <taxon>Glires</taxon>
        <taxon>Rodentia</taxon>
        <taxon>Myomorpha</taxon>
        <taxon>Muroidea</taxon>
        <taxon>Muridae</taxon>
        <taxon>Murinae</taxon>
        <taxon>Rattus</taxon>
    </lineage>
</organism>